<dbReference type="EC" id="2.1.1.190" evidence="1"/>
<dbReference type="EMBL" id="CP001219">
    <property type="protein sequence ID" value="ACK80065.1"/>
    <property type="molecule type" value="Genomic_DNA"/>
</dbReference>
<dbReference type="RefSeq" id="WP_009564760.1">
    <property type="nucleotide sequence ID" value="NC_011761.1"/>
</dbReference>
<dbReference type="SMR" id="B7J921"/>
<dbReference type="STRING" id="243159.AFE_2828"/>
<dbReference type="PaxDb" id="243159-AFE_2828"/>
<dbReference type="GeneID" id="65281857"/>
<dbReference type="KEGG" id="afr:AFE_2828"/>
<dbReference type="eggNOG" id="COG2265">
    <property type="taxonomic scope" value="Bacteria"/>
</dbReference>
<dbReference type="HOGENOM" id="CLU_014689_8_2_6"/>
<dbReference type="Proteomes" id="UP000001362">
    <property type="component" value="Chromosome"/>
</dbReference>
<dbReference type="GO" id="GO:0051539">
    <property type="term" value="F:4 iron, 4 sulfur cluster binding"/>
    <property type="evidence" value="ECO:0007669"/>
    <property type="project" value="UniProtKB-KW"/>
</dbReference>
<dbReference type="GO" id="GO:0005506">
    <property type="term" value="F:iron ion binding"/>
    <property type="evidence" value="ECO:0007669"/>
    <property type="project" value="UniProtKB-UniRule"/>
</dbReference>
<dbReference type="GO" id="GO:0003723">
    <property type="term" value="F:RNA binding"/>
    <property type="evidence" value="ECO:0007669"/>
    <property type="project" value="InterPro"/>
</dbReference>
<dbReference type="GO" id="GO:0070041">
    <property type="term" value="F:rRNA (uridine-C5-)-methyltransferase activity"/>
    <property type="evidence" value="ECO:0007669"/>
    <property type="project" value="UniProtKB-UniRule"/>
</dbReference>
<dbReference type="GO" id="GO:0070475">
    <property type="term" value="P:rRNA base methylation"/>
    <property type="evidence" value="ECO:0007669"/>
    <property type="project" value="TreeGrafter"/>
</dbReference>
<dbReference type="CDD" id="cd02440">
    <property type="entry name" value="AdoMet_MTases"/>
    <property type="match status" value="1"/>
</dbReference>
<dbReference type="FunFam" id="2.40.50.140:FF:000097">
    <property type="entry name" value="23S rRNA (uracil(1939)-C(5))-methyltransferase RlmD"/>
    <property type="match status" value="1"/>
</dbReference>
<dbReference type="Gene3D" id="2.40.50.1070">
    <property type="match status" value="1"/>
</dbReference>
<dbReference type="Gene3D" id="2.40.50.140">
    <property type="entry name" value="Nucleic acid-binding proteins"/>
    <property type="match status" value="1"/>
</dbReference>
<dbReference type="Gene3D" id="3.40.50.150">
    <property type="entry name" value="Vaccinia Virus protein VP39"/>
    <property type="match status" value="1"/>
</dbReference>
<dbReference type="HAMAP" id="MF_01010">
    <property type="entry name" value="23SrRNA_methyltr_RlmD"/>
    <property type="match status" value="1"/>
</dbReference>
<dbReference type="InterPro" id="IPR001566">
    <property type="entry name" value="23S_rRNA_MeTrfase_RlmD"/>
</dbReference>
<dbReference type="InterPro" id="IPR030390">
    <property type="entry name" value="MeTrfase_TrmA_AS"/>
</dbReference>
<dbReference type="InterPro" id="IPR030391">
    <property type="entry name" value="MeTrfase_TrmA_CS"/>
</dbReference>
<dbReference type="InterPro" id="IPR012340">
    <property type="entry name" value="NA-bd_OB-fold"/>
</dbReference>
<dbReference type="InterPro" id="IPR029063">
    <property type="entry name" value="SAM-dependent_MTases_sf"/>
</dbReference>
<dbReference type="InterPro" id="IPR002792">
    <property type="entry name" value="TRAM_dom"/>
</dbReference>
<dbReference type="InterPro" id="IPR010280">
    <property type="entry name" value="U5_MeTrfase_fam"/>
</dbReference>
<dbReference type="NCBIfam" id="NF009639">
    <property type="entry name" value="PRK13168.1"/>
    <property type="match status" value="1"/>
</dbReference>
<dbReference type="NCBIfam" id="TIGR00479">
    <property type="entry name" value="rumA"/>
    <property type="match status" value="1"/>
</dbReference>
<dbReference type="PANTHER" id="PTHR11061:SF49">
    <property type="entry name" value="23S RRNA (URACIL(1939)-C(5))-METHYLTRANSFERASE RLMD"/>
    <property type="match status" value="1"/>
</dbReference>
<dbReference type="PANTHER" id="PTHR11061">
    <property type="entry name" value="RNA M5U METHYLTRANSFERASE"/>
    <property type="match status" value="1"/>
</dbReference>
<dbReference type="Pfam" id="PF01938">
    <property type="entry name" value="TRAM"/>
    <property type="match status" value="1"/>
</dbReference>
<dbReference type="Pfam" id="PF05958">
    <property type="entry name" value="tRNA_U5-meth_tr"/>
    <property type="match status" value="1"/>
</dbReference>
<dbReference type="SUPFAM" id="SSF50249">
    <property type="entry name" value="Nucleic acid-binding proteins"/>
    <property type="match status" value="1"/>
</dbReference>
<dbReference type="SUPFAM" id="SSF53335">
    <property type="entry name" value="S-adenosyl-L-methionine-dependent methyltransferases"/>
    <property type="match status" value="1"/>
</dbReference>
<dbReference type="PROSITE" id="PS51687">
    <property type="entry name" value="SAM_MT_RNA_M5U"/>
    <property type="match status" value="1"/>
</dbReference>
<dbReference type="PROSITE" id="PS50926">
    <property type="entry name" value="TRAM"/>
    <property type="match status" value="1"/>
</dbReference>
<dbReference type="PROSITE" id="PS01230">
    <property type="entry name" value="TRMA_1"/>
    <property type="match status" value="1"/>
</dbReference>
<dbReference type="PROSITE" id="PS01231">
    <property type="entry name" value="TRMA_2"/>
    <property type="match status" value="1"/>
</dbReference>
<accession>B7J921</accession>
<keyword id="KW-0004">4Fe-4S</keyword>
<keyword id="KW-0408">Iron</keyword>
<keyword id="KW-0411">Iron-sulfur</keyword>
<keyword id="KW-0479">Metal-binding</keyword>
<keyword id="KW-0489">Methyltransferase</keyword>
<keyword id="KW-1185">Reference proteome</keyword>
<keyword id="KW-0698">rRNA processing</keyword>
<keyword id="KW-0949">S-adenosyl-L-methionine</keyword>
<keyword id="KW-0808">Transferase</keyword>
<protein>
    <recommendedName>
        <fullName evidence="1">23S rRNA (uracil(1939)-C(5))-methyltransferase RlmD</fullName>
        <ecNumber evidence="1">2.1.1.190</ecNumber>
    </recommendedName>
    <alternativeName>
        <fullName evidence="1">23S rRNA(m5U1939)-methyltransferase</fullName>
    </alternativeName>
</protein>
<reference key="1">
    <citation type="journal article" date="2008" name="BMC Genomics">
        <title>Acidithiobacillus ferrooxidans metabolism: from genome sequence to industrial applications.</title>
        <authorList>
            <person name="Valdes J."/>
            <person name="Pedroso I."/>
            <person name="Quatrini R."/>
            <person name="Dodson R.J."/>
            <person name="Tettelin H."/>
            <person name="Blake R. II"/>
            <person name="Eisen J.A."/>
            <person name="Holmes D.S."/>
        </authorList>
    </citation>
    <scope>NUCLEOTIDE SEQUENCE [LARGE SCALE GENOMIC DNA]</scope>
    <source>
        <strain>ATCC 23270 / DSM 14882 / CIP 104768 / NCIMB 8455</strain>
    </source>
</reference>
<feature type="chain" id="PRO_1000148878" description="23S rRNA (uracil(1939)-C(5))-methyltransferase RlmD">
    <location>
        <begin position="1"/>
        <end position="440"/>
    </location>
</feature>
<feature type="domain" description="TRAM" evidence="1">
    <location>
        <begin position="6"/>
        <end position="64"/>
    </location>
</feature>
<feature type="active site" description="Nucleophile" evidence="1">
    <location>
        <position position="397"/>
    </location>
</feature>
<feature type="binding site" evidence="1">
    <location>
        <position position="77"/>
    </location>
    <ligand>
        <name>[4Fe-4S] cluster</name>
        <dbReference type="ChEBI" id="CHEBI:49883"/>
    </ligand>
</feature>
<feature type="binding site" evidence="1">
    <location>
        <position position="83"/>
    </location>
    <ligand>
        <name>[4Fe-4S] cluster</name>
        <dbReference type="ChEBI" id="CHEBI:49883"/>
    </ligand>
</feature>
<feature type="binding site" evidence="1">
    <location>
        <position position="86"/>
    </location>
    <ligand>
        <name>[4Fe-4S] cluster</name>
        <dbReference type="ChEBI" id="CHEBI:49883"/>
    </ligand>
</feature>
<feature type="binding site" evidence="1">
    <location>
        <position position="164"/>
    </location>
    <ligand>
        <name>[4Fe-4S] cluster</name>
        <dbReference type="ChEBI" id="CHEBI:49883"/>
    </ligand>
</feature>
<feature type="binding site" evidence="1">
    <location>
        <position position="273"/>
    </location>
    <ligand>
        <name>S-adenosyl-L-methionine</name>
        <dbReference type="ChEBI" id="CHEBI:59789"/>
    </ligand>
</feature>
<feature type="binding site" evidence="1">
    <location>
        <position position="302"/>
    </location>
    <ligand>
        <name>S-adenosyl-L-methionine</name>
        <dbReference type="ChEBI" id="CHEBI:59789"/>
    </ligand>
</feature>
<feature type="binding site" evidence="1">
    <location>
        <position position="307"/>
    </location>
    <ligand>
        <name>S-adenosyl-L-methionine</name>
        <dbReference type="ChEBI" id="CHEBI:59789"/>
    </ligand>
</feature>
<feature type="binding site" evidence="1">
    <location>
        <position position="323"/>
    </location>
    <ligand>
        <name>S-adenosyl-L-methionine</name>
        <dbReference type="ChEBI" id="CHEBI:59789"/>
    </ligand>
</feature>
<feature type="binding site" evidence="1">
    <location>
        <position position="351"/>
    </location>
    <ligand>
        <name>S-adenosyl-L-methionine</name>
        <dbReference type="ChEBI" id="CHEBI:59789"/>
    </ligand>
</feature>
<feature type="binding site" evidence="1">
    <location>
        <position position="372"/>
    </location>
    <ligand>
        <name>S-adenosyl-L-methionine</name>
        <dbReference type="ChEBI" id="CHEBI:59789"/>
    </ligand>
</feature>
<comment type="function">
    <text evidence="1">Catalyzes the formation of 5-methyl-uridine at position 1939 (m5U1939) in 23S rRNA.</text>
</comment>
<comment type="catalytic activity">
    <reaction evidence="1">
        <text>uridine(1939) in 23S rRNA + S-adenosyl-L-methionine = 5-methyluridine(1939) in 23S rRNA + S-adenosyl-L-homocysteine + H(+)</text>
        <dbReference type="Rhea" id="RHEA:42908"/>
        <dbReference type="Rhea" id="RHEA-COMP:10278"/>
        <dbReference type="Rhea" id="RHEA-COMP:10279"/>
        <dbReference type="ChEBI" id="CHEBI:15378"/>
        <dbReference type="ChEBI" id="CHEBI:57856"/>
        <dbReference type="ChEBI" id="CHEBI:59789"/>
        <dbReference type="ChEBI" id="CHEBI:65315"/>
        <dbReference type="ChEBI" id="CHEBI:74447"/>
        <dbReference type="EC" id="2.1.1.190"/>
    </reaction>
</comment>
<comment type="similarity">
    <text evidence="1">Belongs to the class I-like SAM-binding methyltransferase superfamily. RNA M5U methyltransferase family. RlmD subfamily.</text>
</comment>
<proteinExistence type="inferred from homology"/>
<evidence type="ECO:0000255" key="1">
    <source>
        <dbReference type="HAMAP-Rule" id="MF_01010"/>
    </source>
</evidence>
<name>RLMD_ACIF2</name>
<sequence length="440" mass="49035">MSRPKPIHNAQPEQVFIESLDTEGRGIARVEGKVLFVDGALPGERVWARRTQNHKSFDRAELLQVDKASSLRVSPPCPHFGVCGGCSLQHLEPAAQVAIKQRQLEDHLWRIGKVRPERVLPPIHGPSLGYRSKARLSVRTPKTRGAMVGFRERNSSYVVDMGQCLTLDPRVGQRILSLRTLIGQMQSPQDFPQIEVAATPDAVALVFRHMRPLAESDLQHLRAFGEQHDLQIWLQPRGPETLYPLWPEQPEPLHYDLPDYRLRLRFDPLVFTQVNQAANQVMVRRAMALLQPQPGEHILDLFCGLGNFTLPIARLGAQVLGIEGDARLVALAAENAAANGLADKARYAVADLTQARMEDFAPAGAIDKMLIDPPRSGAIEVLRSLTPGVRRLVYVSCNPATLARDAEYLVHERGYRLRAAGVVNMFPHTAHVESIALFER</sequence>
<gene>
    <name evidence="1" type="primary">rlmD</name>
    <name type="synonym">rumA</name>
    <name type="ordered locus">AFE_2828</name>
</gene>
<organism>
    <name type="scientific">Acidithiobacillus ferrooxidans (strain ATCC 23270 / DSM 14882 / CIP 104768 / NCIMB 8455)</name>
    <name type="common">Ferrobacillus ferrooxidans (strain ATCC 23270)</name>
    <dbReference type="NCBI Taxonomy" id="243159"/>
    <lineage>
        <taxon>Bacteria</taxon>
        <taxon>Pseudomonadati</taxon>
        <taxon>Pseudomonadota</taxon>
        <taxon>Acidithiobacillia</taxon>
        <taxon>Acidithiobacillales</taxon>
        <taxon>Acidithiobacillaceae</taxon>
        <taxon>Acidithiobacillus</taxon>
    </lineage>
</organism>